<name>RPOC1_SYNJB</name>
<keyword id="KW-0240">DNA-directed RNA polymerase</keyword>
<keyword id="KW-0460">Magnesium</keyword>
<keyword id="KW-0479">Metal-binding</keyword>
<keyword id="KW-0548">Nucleotidyltransferase</keyword>
<keyword id="KW-1185">Reference proteome</keyword>
<keyword id="KW-0804">Transcription</keyword>
<keyword id="KW-0808">Transferase</keyword>
<keyword id="KW-0862">Zinc</keyword>
<protein>
    <recommendedName>
        <fullName evidence="1">DNA-directed RNA polymerase subunit gamma</fullName>
        <shortName evidence="1">RNAP subunit gamma</shortName>
        <ecNumber evidence="1">2.7.7.6</ecNumber>
    </recommendedName>
    <alternativeName>
        <fullName evidence="1">RNA polymerase subunit gamma</fullName>
    </alternativeName>
    <alternativeName>
        <fullName evidence="1">Transcriptase subunit gamma</fullName>
    </alternativeName>
</protein>
<feature type="chain" id="PRO_1000067558" description="DNA-directed RNA polymerase subunit gamma">
    <location>
        <begin position="1"/>
        <end position="627"/>
    </location>
</feature>
<feature type="binding site" evidence="1">
    <location>
        <position position="70"/>
    </location>
    <ligand>
        <name>Zn(2+)</name>
        <dbReference type="ChEBI" id="CHEBI:29105"/>
    </ligand>
</feature>
<feature type="binding site" evidence="1">
    <location>
        <position position="72"/>
    </location>
    <ligand>
        <name>Zn(2+)</name>
        <dbReference type="ChEBI" id="CHEBI:29105"/>
    </ligand>
</feature>
<feature type="binding site" evidence="1">
    <location>
        <position position="85"/>
    </location>
    <ligand>
        <name>Zn(2+)</name>
        <dbReference type="ChEBI" id="CHEBI:29105"/>
    </ligand>
</feature>
<feature type="binding site" evidence="1">
    <location>
        <position position="88"/>
    </location>
    <ligand>
        <name>Zn(2+)</name>
        <dbReference type="ChEBI" id="CHEBI:29105"/>
    </ligand>
</feature>
<feature type="binding site" evidence="1">
    <location>
        <position position="468"/>
    </location>
    <ligand>
        <name>Mg(2+)</name>
        <dbReference type="ChEBI" id="CHEBI:18420"/>
    </ligand>
</feature>
<feature type="binding site" evidence="1">
    <location>
        <position position="470"/>
    </location>
    <ligand>
        <name>Mg(2+)</name>
        <dbReference type="ChEBI" id="CHEBI:18420"/>
    </ligand>
</feature>
<feature type="binding site" evidence="1">
    <location>
        <position position="472"/>
    </location>
    <ligand>
        <name>Mg(2+)</name>
        <dbReference type="ChEBI" id="CHEBI:18420"/>
    </ligand>
</feature>
<dbReference type="EC" id="2.7.7.6" evidence="1"/>
<dbReference type="EMBL" id="CP000240">
    <property type="protein sequence ID" value="ABD03371.1"/>
    <property type="molecule type" value="Genomic_DNA"/>
</dbReference>
<dbReference type="RefSeq" id="WP_011434000.1">
    <property type="nucleotide sequence ID" value="NC_007776.1"/>
</dbReference>
<dbReference type="SMR" id="Q2JJ18"/>
<dbReference type="STRING" id="321332.CYB_2437"/>
<dbReference type="KEGG" id="cyb:CYB_2437"/>
<dbReference type="eggNOG" id="COG0086">
    <property type="taxonomic scope" value="Bacteria"/>
</dbReference>
<dbReference type="HOGENOM" id="CLU_030022_2_0_3"/>
<dbReference type="OrthoDB" id="9815296at2"/>
<dbReference type="Proteomes" id="UP000001938">
    <property type="component" value="Chromosome"/>
</dbReference>
<dbReference type="GO" id="GO:0000428">
    <property type="term" value="C:DNA-directed RNA polymerase complex"/>
    <property type="evidence" value="ECO:0007669"/>
    <property type="project" value="UniProtKB-KW"/>
</dbReference>
<dbReference type="GO" id="GO:0003677">
    <property type="term" value="F:DNA binding"/>
    <property type="evidence" value="ECO:0007669"/>
    <property type="project" value="UniProtKB-UniRule"/>
</dbReference>
<dbReference type="GO" id="GO:0003899">
    <property type="term" value="F:DNA-directed RNA polymerase activity"/>
    <property type="evidence" value="ECO:0007669"/>
    <property type="project" value="UniProtKB-UniRule"/>
</dbReference>
<dbReference type="GO" id="GO:0000287">
    <property type="term" value="F:magnesium ion binding"/>
    <property type="evidence" value="ECO:0007669"/>
    <property type="project" value="UniProtKB-UniRule"/>
</dbReference>
<dbReference type="GO" id="GO:0008270">
    <property type="term" value="F:zinc ion binding"/>
    <property type="evidence" value="ECO:0007669"/>
    <property type="project" value="UniProtKB-UniRule"/>
</dbReference>
<dbReference type="GO" id="GO:0006351">
    <property type="term" value="P:DNA-templated transcription"/>
    <property type="evidence" value="ECO:0007669"/>
    <property type="project" value="UniProtKB-UniRule"/>
</dbReference>
<dbReference type="CDD" id="cd01609">
    <property type="entry name" value="RNAP_beta'_N"/>
    <property type="match status" value="1"/>
</dbReference>
<dbReference type="Gene3D" id="1.10.40.90">
    <property type="match status" value="1"/>
</dbReference>
<dbReference type="Gene3D" id="2.40.40.20">
    <property type="match status" value="1"/>
</dbReference>
<dbReference type="Gene3D" id="4.10.860.120">
    <property type="entry name" value="RNA polymerase II, clamp domain"/>
    <property type="match status" value="1"/>
</dbReference>
<dbReference type="Gene3D" id="1.10.274.100">
    <property type="entry name" value="RNA polymerase Rpb1, domain 3"/>
    <property type="match status" value="1"/>
</dbReference>
<dbReference type="HAMAP" id="MF_01323">
    <property type="entry name" value="RNApol_bact_RpoC1"/>
    <property type="match status" value="1"/>
</dbReference>
<dbReference type="InterPro" id="IPR012755">
    <property type="entry name" value="DNA-dir_RpoC1_gamma"/>
</dbReference>
<dbReference type="InterPro" id="IPR045867">
    <property type="entry name" value="DNA-dir_RpoC_beta_prime"/>
</dbReference>
<dbReference type="InterPro" id="IPR000722">
    <property type="entry name" value="RNA_pol_asu"/>
</dbReference>
<dbReference type="InterPro" id="IPR006592">
    <property type="entry name" value="RNA_pol_N"/>
</dbReference>
<dbReference type="InterPro" id="IPR007080">
    <property type="entry name" value="RNA_pol_Rpb1_1"/>
</dbReference>
<dbReference type="InterPro" id="IPR007066">
    <property type="entry name" value="RNA_pol_Rpb1_3"/>
</dbReference>
<dbReference type="InterPro" id="IPR042102">
    <property type="entry name" value="RNA_pol_Rpb1_3_sf"/>
</dbReference>
<dbReference type="InterPro" id="IPR044893">
    <property type="entry name" value="RNA_pol_Rpb1_clamp_domain"/>
</dbReference>
<dbReference type="InterPro" id="IPR034678">
    <property type="entry name" value="RNApol_RpoC1"/>
</dbReference>
<dbReference type="NCBIfam" id="NF002729">
    <property type="entry name" value="PRK02625.1"/>
    <property type="match status" value="1"/>
</dbReference>
<dbReference type="NCBIfam" id="TIGR02387">
    <property type="entry name" value="rpoC1_cyan"/>
    <property type="match status" value="1"/>
</dbReference>
<dbReference type="PANTHER" id="PTHR19376">
    <property type="entry name" value="DNA-DIRECTED RNA POLYMERASE"/>
    <property type="match status" value="1"/>
</dbReference>
<dbReference type="PANTHER" id="PTHR19376:SF54">
    <property type="entry name" value="DNA-DIRECTED RNA POLYMERASE SUBUNIT BETA"/>
    <property type="match status" value="1"/>
</dbReference>
<dbReference type="Pfam" id="PF04997">
    <property type="entry name" value="RNA_pol_Rpb1_1"/>
    <property type="match status" value="1"/>
</dbReference>
<dbReference type="Pfam" id="PF00623">
    <property type="entry name" value="RNA_pol_Rpb1_2"/>
    <property type="match status" value="1"/>
</dbReference>
<dbReference type="Pfam" id="PF04983">
    <property type="entry name" value="RNA_pol_Rpb1_3"/>
    <property type="match status" value="1"/>
</dbReference>
<dbReference type="SMART" id="SM00663">
    <property type="entry name" value="RPOLA_N"/>
    <property type="match status" value="1"/>
</dbReference>
<dbReference type="SUPFAM" id="SSF64484">
    <property type="entry name" value="beta and beta-prime subunits of DNA dependent RNA-polymerase"/>
    <property type="match status" value="1"/>
</dbReference>
<organism>
    <name type="scientific">Synechococcus sp. (strain JA-2-3B'a(2-13))</name>
    <name type="common">Cyanobacteria bacterium Yellowstone B-Prime</name>
    <dbReference type="NCBI Taxonomy" id="321332"/>
    <lineage>
        <taxon>Bacteria</taxon>
        <taxon>Bacillati</taxon>
        <taxon>Cyanobacteriota</taxon>
        <taxon>Cyanophyceae</taxon>
        <taxon>Synechococcales</taxon>
        <taxon>Synechococcaceae</taxon>
        <taxon>Synechococcus</taxon>
    </lineage>
</organism>
<proteinExistence type="inferred from homology"/>
<gene>
    <name evidence="1" type="primary">rpoC1</name>
    <name type="ordered locus">CYB_2437</name>
</gene>
<evidence type="ECO:0000255" key="1">
    <source>
        <dbReference type="HAMAP-Rule" id="MF_01323"/>
    </source>
</evidence>
<accession>Q2JJ18</accession>
<sequence>MAKTEQRFDYVKIGLASPERIMEWGQRTLPNGQVVGEVTKPETINYRTLKPEMDGLFCERIFGPAKDWECHCGKYKRVRHRGIVCERCGVEVTESRVRRHRMGYIKLAAPVTHVWYLKGIPSHIATLLDMPLRDVEQVVYFNAYVVVDPGNAQNLSYKQLLTEDQFLEIEDQMYEEGSELQLPENWAMIGAEAIERLLKDIDLEKEAEQLREEITSARGQKRARLIKRLRVIDNFIATGSRPEWMVLRVLPVIPPDLRPMVQLDGGRFATSDLNDLYRRVINRNNRLARLQEIMAPEIIVRNEKRMLQEAVDALIDNGRRGRVVAGANNRPLKSLSDIIEGKQGRFRQNLLGKRVDYSGRSVIVVGPNLRMHQCGLPKEMAIELFQPFVIHKLIKRGIVNNIKAAKKMIQSNDPQIWDVLEEVIDGHPVLLNRAPTLHRLGIQAFEPILVEGRAIQLHPLVCPAFNADFDGDQMAVHVPLSLEAQAEARLLMLATNNILSPATGAPIITPSQDMVLGCYYLTADNPHAPDIGDRFFASLEDALIAYDRGAIGLHSKVWVRYHGPMELGKGEKESEPQIIEEAGGIRLKITNYRRIREDQNGNVISQYIRTTPGRIIFNKTVQDILSA</sequence>
<reference key="1">
    <citation type="journal article" date="2007" name="ISME J.">
        <title>Population level functional diversity in a microbial community revealed by comparative genomic and metagenomic analyses.</title>
        <authorList>
            <person name="Bhaya D."/>
            <person name="Grossman A.R."/>
            <person name="Steunou A.-S."/>
            <person name="Khuri N."/>
            <person name="Cohan F.M."/>
            <person name="Hamamura N."/>
            <person name="Melendrez M.C."/>
            <person name="Bateson M.M."/>
            <person name="Ward D.M."/>
            <person name="Heidelberg J.F."/>
        </authorList>
    </citation>
    <scope>NUCLEOTIDE SEQUENCE [LARGE SCALE GENOMIC DNA]</scope>
    <source>
        <strain>JA-2-3B'a(2-13)</strain>
    </source>
</reference>
<comment type="function">
    <text evidence="1">DNA-dependent RNA polymerase catalyzes the transcription of DNA into RNA using the four ribonucleoside triphosphates as substrates.</text>
</comment>
<comment type="catalytic activity">
    <reaction evidence="1">
        <text>RNA(n) + a ribonucleoside 5'-triphosphate = RNA(n+1) + diphosphate</text>
        <dbReference type="Rhea" id="RHEA:21248"/>
        <dbReference type="Rhea" id="RHEA-COMP:14527"/>
        <dbReference type="Rhea" id="RHEA-COMP:17342"/>
        <dbReference type="ChEBI" id="CHEBI:33019"/>
        <dbReference type="ChEBI" id="CHEBI:61557"/>
        <dbReference type="ChEBI" id="CHEBI:140395"/>
        <dbReference type="EC" id="2.7.7.6"/>
    </reaction>
</comment>
<comment type="cofactor">
    <cofactor evidence="1">
        <name>Mg(2+)</name>
        <dbReference type="ChEBI" id="CHEBI:18420"/>
    </cofactor>
    <text evidence="1">Binds 1 Mg(2+) ion per subunit.</text>
</comment>
<comment type="cofactor">
    <cofactor evidence="1">
        <name>Zn(2+)</name>
        <dbReference type="ChEBI" id="CHEBI:29105"/>
    </cofactor>
    <text evidence="1">Binds 1 Zn(2+) ion per subunit.</text>
</comment>
<comment type="subunit">
    <text evidence="1">In cyanobacteria the RNAP catalytic core is composed of 2 alpha, 1 beta, 1 beta', 1 gamma and 1 omega subunit. When a sigma factor is associated with the core the holoenzyme is formed, which can initiate transcription.</text>
</comment>
<comment type="similarity">
    <text evidence="1">Belongs to the RNA polymerase beta' chain family. RpoC1 subfamily.</text>
</comment>